<sequence>MSRYRRPRFKKIRRLGALPGLTSKRPKTGNDLKNQSRSGKKSQYRIRLEEKQKLRFHYGLTERQLLKYVRIAGKAKGSTGQVLLQLLEMRLDNILFRLGMASTIPQARQLVNHRHILVNGSIVDIPSYRCKPRDIITAKDEKKSRTLIQNYLDSSPPQELPKHLTLQPLQYKGLVNQIIDSKWVSLKINELLVVEYYSRQT</sequence>
<proteinExistence type="inferred from homology"/>
<name>RR4_CUCSA</name>
<dbReference type="EMBL" id="DQ119058">
    <property type="protein sequence ID" value="AAZ94653.1"/>
    <property type="molecule type" value="Genomic_DNA"/>
</dbReference>
<dbReference type="EMBL" id="AJ970307">
    <property type="protein sequence ID" value="CAJ00760.1"/>
    <property type="molecule type" value="Genomic_DNA"/>
</dbReference>
<dbReference type="EMBL" id="DQ865975">
    <property type="protein sequence ID" value="ABI97419.1"/>
    <property type="molecule type" value="Genomic_DNA"/>
</dbReference>
<dbReference type="EMBL" id="DQ865976">
    <property type="protein sequence ID" value="ABI98748.1"/>
    <property type="molecule type" value="Genomic_DNA"/>
</dbReference>
<dbReference type="RefSeq" id="YP_247601.1">
    <property type="nucleotide sequence ID" value="NC_007144.1"/>
</dbReference>
<dbReference type="SMR" id="Q4VZH3"/>
<dbReference type="GeneID" id="3429315"/>
<dbReference type="KEGG" id="csv:3429315"/>
<dbReference type="OrthoDB" id="2443at2759"/>
<dbReference type="GO" id="GO:0009507">
    <property type="term" value="C:chloroplast"/>
    <property type="evidence" value="ECO:0007669"/>
    <property type="project" value="UniProtKB-SubCell"/>
</dbReference>
<dbReference type="GO" id="GO:0015935">
    <property type="term" value="C:small ribosomal subunit"/>
    <property type="evidence" value="ECO:0007669"/>
    <property type="project" value="InterPro"/>
</dbReference>
<dbReference type="GO" id="GO:0019843">
    <property type="term" value="F:rRNA binding"/>
    <property type="evidence" value="ECO:0007669"/>
    <property type="project" value="UniProtKB-UniRule"/>
</dbReference>
<dbReference type="GO" id="GO:0003735">
    <property type="term" value="F:structural constituent of ribosome"/>
    <property type="evidence" value="ECO:0007669"/>
    <property type="project" value="InterPro"/>
</dbReference>
<dbReference type="GO" id="GO:0006412">
    <property type="term" value="P:translation"/>
    <property type="evidence" value="ECO:0007669"/>
    <property type="project" value="UniProtKB-UniRule"/>
</dbReference>
<dbReference type="CDD" id="cd00165">
    <property type="entry name" value="S4"/>
    <property type="match status" value="1"/>
</dbReference>
<dbReference type="FunFam" id="1.10.1050.10:FF:000002">
    <property type="entry name" value="30S ribosomal protein S4, chloroplastic"/>
    <property type="match status" value="1"/>
</dbReference>
<dbReference type="FunFam" id="3.10.290.10:FF:000081">
    <property type="entry name" value="30S ribosomal protein S4, chloroplastic"/>
    <property type="match status" value="1"/>
</dbReference>
<dbReference type="Gene3D" id="1.10.1050.10">
    <property type="entry name" value="Ribosomal Protein S4 Delta 41, Chain A, domain 1"/>
    <property type="match status" value="1"/>
</dbReference>
<dbReference type="Gene3D" id="3.10.290.10">
    <property type="entry name" value="RNA-binding S4 domain"/>
    <property type="match status" value="1"/>
</dbReference>
<dbReference type="HAMAP" id="MF_01306_B">
    <property type="entry name" value="Ribosomal_uS4_B"/>
    <property type="match status" value="1"/>
</dbReference>
<dbReference type="InterPro" id="IPR022801">
    <property type="entry name" value="Ribosomal_uS4"/>
</dbReference>
<dbReference type="InterPro" id="IPR005709">
    <property type="entry name" value="Ribosomal_uS4_bac-type"/>
</dbReference>
<dbReference type="InterPro" id="IPR018079">
    <property type="entry name" value="Ribosomal_uS4_CS"/>
</dbReference>
<dbReference type="InterPro" id="IPR001912">
    <property type="entry name" value="Ribosomal_uS4_N"/>
</dbReference>
<dbReference type="InterPro" id="IPR002942">
    <property type="entry name" value="S4_RNA-bd"/>
</dbReference>
<dbReference type="InterPro" id="IPR036986">
    <property type="entry name" value="S4_RNA-bd_sf"/>
</dbReference>
<dbReference type="NCBIfam" id="NF003717">
    <property type="entry name" value="PRK05327.1"/>
    <property type="match status" value="1"/>
</dbReference>
<dbReference type="NCBIfam" id="TIGR01017">
    <property type="entry name" value="rpsD_bact"/>
    <property type="match status" value="1"/>
</dbReference>
<dbReference type="PANTHER" id="PTHR11831">
    <property type="entry name" value="30S 40S RIBOSOMAL PROTEIN"/>
    <property type="match status" value="1"/>
</dbReference>
<dbReference type="PANTHER" id="PTHR11831:SF4">
    <property type="entry name" value="SMALL RIBOSOMAL SUBUNIT PROTEIN US4M"/>
    <property type="match status" value="1"/>
</dbReference>
<dbReference type="Pfam" id="PF00163">
    <property type="entry name" value="Ribosomal_S4"/>
    <property type="match status" value="1"/>
</dbReference>
<dbReference type="Pfam" id="PF01479">
    <property type="entry name" value="S4"/>
    <property type="match status" value="1"/>
</dbReference>
<dbReference type="SMART" id="SM01390">
    <property type="entry name" value="Ribosomal_S4"/>
    <property type="match status" value="1"/>
</dbReference>
<dbReference type="SMART" id="SM00363">
    <property type="entry name" value="S4"/>
    <property type="match status" value="1"/>
</dbReference>
<dbReference type="SUPFAM" id="SSF55174">
    <property type="entry name" value="Alpha-L RNA-binding motif"/>
    <property type="match status" value="1"/>
</dbReference>
<dbReference type="PROSITE" id="PS00632">
    <property type="entry name" value="RIBOSOMAL_S4"/>
    <property type="match status" value="1"/>
</dbReference>
<dbReference type="PROSITE" id="PS50889">
    <property type="entry name" value="S4"/>
    <property type="match status" value="1"/>
</dbReference>
<gene>
    <name type="primary">rps4</name>
    <name type="ordered locus">CsCp037</name>
</gene>
<feature type="chain" id="PRO_0000228945" description="Small ribosomal subunit protein uS4c">
    <location>
        <begin position="1"/>
        <end position="201"/>
    </location>
</feature>
<feature type="domain" description="S4 RNA-binding">
    <location>
        <begin position="89"/>
        <end position="150"/>
    </location>
</feature>
<feature type="region of interest" description="Disordered" evidence="2">
    <location>
        <begin position="15"/>
        <end position="44"/>
    </location>
</feature>
<feature type="sequence conflict" description="In Ref. 3; ABI98748/ABI97419." evidence="3" ref="3">
    <original>R</original>
    <variation>G</variation>
    <location>
        <position position="6"/>
    </location>
</feature>
<protein>
    <recommendedName>
        <fullName evidence="3">Small ribosomal subunit protein uS4c</fullName>
    </recommendedName>
    <alternativeName>
        <fullName>30S ribosomal protein S4, chloroplastic</fullName>
    </alternativeName>
</protein>
<reference key="1">
    <citation type="journal article" date="2006" name="Plant Cell Rep.">
        <title>Complete sequence and organization of the cucumber (Cucumis sativus L. cv. Baekmibaekdadagi) chloroplast genome.</title>
        <authorList>
            <person name="Kim J.-S."/>
            <person name="Jung J.D."/>
            <person name="Lee J.-A."/>
            <person name="Park H.-W."/>
            <person name="Oh K.-H."/>
            <person name="Jeong W.J."/>
            <person name="Choi D.-W."/>
            <person name="Liu J.R."/>
            <person name="Cho K.Y."/>
        </authorList>
    </citation>
    <scope>NUCLEOTIDE SEQUENCE [LARGE SCALE GENOMIC DNA]</scope>
    <source>
        <strain>cv. Baekmibaekdadagi</strain>
    </source>
</reference>
<reference key="2">
    <citation type="journal article" date="2007" name="Cell. Mol. Biol. Lett.">
        <title>The complete structure of the cucumber (Cucumis sativus L.) chloroplast genome: its composition and comparative analysis.</title>
        <authorList>
            <person name="Plader W.W."/>
            <person name="Yukawa Y."/>
            <person name="Sugiura M."/>
            <person name="Malepszy S."/>
        </authorList>
    </citation>
    <scope>NUCLEOTIDE SEQUENCE [LARGE SCALE GENOMIC DNA]</scope>
    <source>
        <strain>cv. Borszczagowski</strain>
    </source>
</reference>
<reference key="3">
    <citation type="journal article" date="2007" name="Genome">
        <title>Sequencing cucumber (Cucumis sativus L.) chloroplast genomes identifies differences between chilling-tolerant and -susceptible cucumber lines.</title>
        <authorList>
            <person name="Chung S.-M."/>
            <person name="Gordon V.S."/>
            <person name="Staub J.E."/>
        </authorList>
    </citation>
    <scope>NUCLEOTIDE SEQUENCE [LARGE SCALE GENOMIC DNA]</scope>
    <source>
        <strain>cv. Chipper</strain>
        <strain>cv. Gy14</strain>
    </source>
</reference>
<geneLocation type="chloroplast"/>
<organism>
    <name type="scientific">Cucumis sativus</name>
    <name type="common">Cucumber</name>
    <dbReference type="NCBI Taxonomy" id="3659"/>
    <lineage>
        <taxon>Eukaryota</taxon>
        <taxon>Viridiplantae</taxon>
        <taxon>Streptophyta</taxon>
        <taxon>Embryophyta</taxon>
        <taxon>Tracheophyta</taxon>
        <taxon>Spermatophyta</taxon>
        <taxon>Magnoliopsida</taxon>
        <taxon>eudicotyledons</taxon>
        <taxon>Gunneridae</taxon>
        <taxon>Pentapetalae</taxon>
        <taxon>rosids</taxon>
        <taxon>fabids</taxon>
        <taxon>Cucurbitales</taxon>
        <taxon>Cucurbitaceae</taxon>
        <taxon>Benincaseae</taxon>
        <taxon>Cucumis</taxon>
    </lineage>
</organism>
<evidence type="ECO:0000250" key="1"/>
<evidence type="ECO:0000256" key="2">
    <source>
        <dbReference type="SAM" id="MobiDB-lite"/>
    </source>
</evidence>
<evidence type="ECO:0000305" key="3"/>
<keyword id="KW-0150">Chloroplast</keyword>
<keyword id="KW-0934">Plastid</keyword>
<keyword id="KW-0687">Ribonucleoprotein</keyword>
<keyword id="KW-0689">Ribosomal protein</keyword>
<keyword id="KW-0694">RNA-binding</keyword>
<keyword id="KW-0699">rRNA-binding</keyword>
<accession>Q4VZH3</accession>
<accession>A5J1T6</accession>
<accession>Q2QD87</accession>
<comment type="function">
    <text evidence="1">One of the primary rRNA binding proteins, it binds directly to 16S rRNA where it nucleates assembly of the body of the 30S subunit.</text>
</comment>
<comment type="function">
    <text evidence="1">With S5 and S12 plays an important role in translational accuracy.</text>
</comment>
<comment type="subunit">
    <text evidence="1">Part of the 30S ribosomal subunit. Contacts protein S5. The interaction surface between S4 and S5 is involved in control of translational fidelity (By similarity).</text>
</comment>
<comment type="subcellular location">
    <subcellularLocation>
        <location>Plastid</location>
        <location>Chloroplast</location>
    </subcellularLocation>
</comment>
<comment type="similarity">
    <text evidence="3">Belongs to the universal ribosomal protein uS4 family.</text>
</comment>